<gene>
    <name evidence="1" type="primary">dinB</name>
    <name type="ordered locus">NMB1448</name>
</gene>
<feature type="chain" id="PRO_0000173929" description="DNA polymerase IV">
    <location>
        <begin position="1"/>
        <end position="318"/>
    </location>
</feature>
<feature type="domain" description="UmuC" evidence="1">
    <location>
        <begin position="6"/>
        <end position="186"/>
    </location>
</feature>
<feature type="active site" evidence="1">
    <location>
        <position position="105"/>
    </location>
</feature>
<feature type="binding site" evidence="1">
    <location>
        <position position="10"/>
    </location>
    <ligand>
        <name>Mg(2+)</name>
        <dbReference type="ChEBI" id="CHEBI:18420"/>
    </ligand>
</feature>
<feature type="binding site" evidence="1">
    <location>
        <position position="104"/>
    </location>
    <ligand>
        <name>Mg(2+)</name>
        <dbReference type="ChEBI" id="CHEBI:18420"/>
    </ligand>
</feature>
<feature type="site" description="Substrate discrimination" evidence="1">
    <location>
        <position position="15"/>
    </location>
</feature>
<proteinExistence type="inferred from homology"/>
<keyword id="KW-0963">Cytoplasm</keyword>
<keyword id="KW-0227">DNA damage</keyword>
<keyword id="KW-0234">DNA repair</keyword>
<keyword id="KW-0235">DNA replication</keyword>
<keyword id="KW-0238">DNA-binding</keyword>
<keyword id="KW-0239">DNA-directed DNA polymerase</keyword>
<keyword id="KW-0460">Magnesium</keyword>
<keyword id="KW-0479">Metal-binding</keyword>
<keyword id="KW-0515">Mutator protein</keyword>
<keyword id="KW-0548">Nucleotidyltransferase</keyword>
<keyword id="KW-1185">Reference proteome</keyword>
<keyword id="KW-0808">Transferase</keyword>
<name>DPO4_NEIMB</name>
<accession>Q9JYS8</accession>
<sequence length="318" mass="35966">MSSRKIIHIDMDAFYASVELREQPHLKGRPVVVAWEGARSVICAASYEARQFGLHSAMSVATAKRLCPQAVYVPPHFDLYRQVSAQIHAVFRRYTDLIEPLSLDEAYLDVTRNFKNIPYAGDVAKEIRAAIFAETGLTASAGIAPNKFLAKIASDWRKPNGQFVLPPHKVMAFLETLPLGKIPGVGKVTLKKMQSLGMRTAGDLRRFERGELLNHFGRYGYRLYDLVRGTDERPVKAERERLQISTEITLPEDLPLEQAAGHLPHLAEDLWRQITRKNVEAQSVTLKLKTYDFRIITRTLTYSSVLPDCALCCRLRKC</sequence>
<dbReference type="EC" id="2.7.7.7" evidence="1"/>
<dbReference type="EMBL" id="AE002098">
    <property type="protein sequence ID" value="AAF41808.1"/>
    <property type="molecule type" value="Genomic_DNA"/>
</dbReference>
<dbReference type="PIR" id="A81083">
    <property type="entry name" value="A81083"/>
</dbReference>
<dbReference type="RefSeq" id="NP_274460.1">
    <property type="nucleotide sequence ID" value="NC_003112.2"/>
</dbReference>
<dbReference type="SMR" id="Q9JYS8"/>
<dbReference type="FunCoup" id="Q9JYS8">
    <property type="interactions" value="431"/>
</dbReference>
<dbReference type="STRING" id="122586.NMB1448"/>
<dbReference type="PaxDb" id="122586-NMB1448"/>
<dbReference type="KEGG" id="nme:NMB1448"/>
<dbReference type="PATRIC" id="fig|122586.8.peg.1825"/>
<dbReference type="HOGENOM" id="CLU_012348_1_2_4"/>
<dbReference type="InParanoid" id="Q9JYS8"/>
<dbReference type="OrthoDB" id="9808813at2"/>
<dbReference type="Proteomes" id="UP000000425">
    <property type="component" value="Chromosome"/>
</dbReference>
<dbReference type="GO" id="GO:0005737">
    <property type="term" value="C:cytoplasm"/>
    <property type="evidence" value="ECO:0007669"/>
    <property type="project" value="UniProtKB-SubCell"/>
</dbReference>
<dbReference type="GO" id="GO:0003684">
    <property type="term" value="F:damaged DNA binding"/>
    <property type="evidence" value="ECO:0007669"/>
    <property type="project" value="InterPro"/>
</dbReference>
<dbReference type="GO" id="GO:0003887">
    <property type="term" value="F:DNA-directed DNA polymerase activity"/>
    <property type="evidence" value="ECO:0000318"/>
    <property type="project" value="GO_Central"/>
</dbReference>
<dbReference type="GO" id="GO:0000287">
    <property type="term" value="F:magnesium ion binding"/>
    <property type="evidence" value="ECO:0007669"/>
    <property type="project" value="UniProtKB-UniRule"/>
</dbReference>
<dbReference type="GO" id="GO:0006261">
    <property type="term" value="P:DNA-templated DNA replication"/>
    <property type="evidence" value="ECO:0007669"/>
    <property type="project" value="UniProtKB-UniRule"/>
</dbReference>
<dbReference type="GO" id="GO:0042276">
    <property type="term" value="P:error-prone translesion synthesis"/>
    <property type="evidence" value="ECO:0000318"/>
    <property type="project" value="GO_Central"/>
</dbReference>
<dbReference type="GO" id="GO:0009432">
    <property type="term" value="P:SOS response"/>
    <property type="evidence" value="ECO:0000318"/>
    <property type="project" value="GO_Central"/>
</dbReference>
<dbReference type="CDD" id="cd03586">
    <property type="entry name" value="PolY_Pol_IV_kappa"/>
    <property type="match status" value="1"/>
</dbReference>
<dbReference type="FunFam" id="1.10.150.20:FF:000019">
    <property type="entry name" value="DNA polymerase IV"/>
    <property type="match status" value="1"/>
</dbReference>
<dbReference type="FunFam" id="3.30.70.270:FF:000070">
    <property type="entry name" value="DNA polymerase IV"/>
    <property type="match status" value="1"/>
</dbReference>
<dbReference type="FunFam" id="3.40.1170.60:FF:000026">
    <property type="entry name" value="DNA polymerase IV"/>
    <property type="match status" value="1"/>
</dbReference>
<dbReference type="Gene3D" id="3.30.70.270">
    <property type="match status" value="2"/>
</dbReference>
<dbReference type="Gene3D" id="3.40.1170.60">
    <property type="match status" value="1"/>
</dbReference>
<dbReference type="Gene3D" id="1.10.150.20">
    <property type="entry name" value="5' to 3' exonuclease, C-terminal subdomain"/>
    <property type="match status" value="1"/>
</dbReference>
<dbReference type="Gene3D" id="3.30.1490.100">
    <property type="entry name" value="DNA polymerase, Y-family, little finger domain"/>
    <property type="match status" value="1"/>
</dbReference>
<dbReference type="HAMAP" id="MF_01113">
    <property type="entry name" value="DNApol_IV"/>
    <property type="match status" value="1"/>
</dbReference>
<dbReference type="InterPro" id="IPR043502">
    <property type="entry name" value="DNA/RNA_pol_sf"/>
</dbReference>
<dbReference type="InterPro" id="IPR036775">
    <property type="entry name" value="DNA_pol_Y-fam_lit_finger_sf"/>
</dbReference>
<dbReference type="InterPro" id="IPR017961">
    <property type="entry name" value="DNA_pol_Y-fam_little_finger"/>
</dbReference>
<dbReference type="InterPro" id="IPR050116">
    <property type="entry name" value="DNA_polymerase-Y"/>
</dbReference>
<dbReference type="InterPro" id="IPR022880">
    <property type="entry name" value="DNApol_IV"/>
</dbReference>
<dbReference type="InterPro" id="IPR053848">
    <property type="entry name" value="IMS_HHH_1"/>
</dbReference>
<dbReference type="InterPro" id="IPR043128">
    <property type="entry name" value="Rev_trsase/Diguanyl_cyclase"/>
</dbReference>
<dbReference type="InterPro" id="IPR001126">
    <property type="entry name" value="UmuC"/>
</dbReference>
<dbReference type="NCBIfam" id="NF002677">
    <property type="entry name" value="PRK02406.1"/>
    <property type="match status" value="1"/>
</dbReference>
<dbReference type="PANTHER" id="PTHR11076:SF33">
    <property type="entry name" value="DNA POLYMERASE KAPPA"/>
    <property type="match status" value="1"/>
</dbReference>
<dbReference type="PANTHER" id="PTHR11076">
    <property type="entry name" value="DNA REPAIR POLYMERASE UMUC / TRANSFERASE FAMILY MEMBER"/>
    <property type="match status" value="1"/>
</dbReference>
<dbReference type="Pfam" id="PF00817">
    <property type="entry name" value="IMS"/>
    <property type="match status" value="1"/>
</dbReference>
<dbReference type="Pfam" id="PF11799">
    <property type="entry name" value="IMS_C"/>
    <property type="match status" value="1"/>
</dbReference>
<dbReference type="Pfam" id="PF21999">
    <property type="entry name" value="IMS_HHH_1"/>
    <property type="match status" value="1"/>
</dbReference>
<dbReference type="SUPFAM" id="SSF56672">
    <property type="entry name" value="DNA/RNA polymerases"/>
    <property type="match status" value="1"/>
</dbReference>
<dbReference type="SUPFAM" id="SSF100879">
    <property type="entry name" value="Lesion bypass DNA polymerase (Y-family), little finger domain"/>
    <property type="match status" value="1"/>
</dbReference>
<dbReference type="PROSITE" id="PS50173">
    <property type="entry name" value="UMUC"/>
    <property type="match status" value="1"/>
</dbReference>
<reference key="1">
    <citation type="journal article" date="2000" name="Science">
        <title>Complete genome sequence of Neisseria meningitidis serogroup B strain MC58.</title>
        <authorList>
            <person name="Tettelin H."/>
            <person name="Saunders N.J."/>
            <person name="Heidelberg J.F."/>
            <person name="Jeffries A.C."/>
            <person name="Nelson K.E."/>
            <person name="Eisen J.A."/>
            <person name="Ketchum K.A."/>
            <person name="Hood D.W."/>
            <person name="Peden J.F."/>
            <person name="Dodson R.J."/>
            <person name="Nelson W.C."/>
            <person name="Gwinn M.L."/>
            <person name="DeBoy R.T."/>
            <person name="Peterson J.D."/>
            <person name="Hickey E.K."/>
            <person name="Haft D.H."/>
            <person name="Salzberg S.L."/>
            <person name="White O."/>
            <person name="Fleischmann R.D."/>
            <person name="Dougherty B.A."/>
            <person name="Mason T.M."/>
            <person name="Ciecko A."/>
            <person name="Parksey D.S."/>
            <person name="Blair E."/>
            <person name="Cittone H."/>
            <person name="Clark E.B."/>
            <person name="Cotton M.D."/>
            <person name="Utterback T.R."/>
            <person name="Khouri H.M."/>
            <person name="Qin H."/>
            <person name="Vamathevan J.J."/>
            <person name="Gill J."/>
            <person name="Scarlato V."/>
            <person name="Masignani V."/>
            <person name="Pizza M."/>
            <person name="Grandi G."/>
            <person name="Sun L."/>
            <person name="Smith H.O."/>
            <person name="Fraser C.M."/>
            <person name="Moxon E.R."/>
            <person name="Rappuoli R."/>
            <person name="Venter J.C."/>
        </authorList>
    </citation>
    <scope>NUCLEOTIDE SEQUENCE [LARGE SCALE GENOMIC DNA]</scope>
    <source>
        <strain>ATCC BAA-335 / MC58</strain>
    </source>
</reference>
<evidence type="ECO:0000255" key="1">
    <source>
        <dbReference type="HAMAP-Rule" id="MF_01113"/>
    </source>
</evidence>
<protein>
    <recommendedName>
        <fullName evidence="1">DNA polymerase IV</fullName>
        <shortName evidence="1">Pol IV</shortName>
        <ecNumber evidence="1">2.7.7.7</ecNumber>
    </recommendedName>
</protein>
<organism>
    <name type="scientific">Neisseria meningitidis serogroup B (strain ATCC BAA-335 / MC58)</name>
    <dbReference type="NCBI Taxonomy" id="122586"/>
    <lineage>
        <taxon>Bacteria</taxon>
        <taxon>Pseudomonadati</taxon>
        <taxon>Pseudomonadota</taxon>
        <taxon>Betaproteobacteria</taxon>
        <taxon>Neisseriales</taxon>
        <taxon>Neisseriaceae</taxon>
        <taxon>Neisseria</taxon>
    </lineage>
</organism>
<comment type="function">
    <text evidence="1">Poorly processive, error-prone DNA polymerase involved in untargeted mutagenesis. Copies undamaged DNA at stalled replication forks, which arise in vivo from mismatched or misaligned primer ends. These misaligned primers can be extended by PolIV. Exhibits no 3'-5' exonuclease (proofreading) activity. May be involved in translesional synthesis, in conjunction with the beta clamp from PolIII.</text>
</comment>
<comment type="catalytic activity">
    <reaction evidence="1">
        <text>DNA(n) + a 2'-deoxyribonucleoside 5'-triphosphate = DNA(n+1) + diphosphate</text>
        <dbReference type="Rhea" id="RHEA:22508"/>
        <dbReference type="Rhea" id="RHEA-COMP:17339"/>
        <dbReference type="Rhea" id="RHEA-COMP:17340"/>
        <dbReference type="ChEBI" id="CHEBI:33019"/>
        <dbReference type="ChEBI" id="CHEBI:61560"/>
        <dbReference type="ChEBI" id="CHEBI:173112"/>
        <dbReference type="EC" id="2.7.7.7"/>
    </reaction>
</comment>
<comment type="cofactor">
    <cofactor evidence="1">
        <name>Mg(2+)</name>
        <dbReference type="ChEBI" id="CHEBI:18420"/>
    </cofactor>
    <text evidence="1">Binds 2 magnesium ions per subunit.</text>
</comment>
<comment type="subunit">
    <text evidence="1">Monomer.</text>
</comment>
<comment type="subcellular location">
    <subcellularLocation>
        <location evidence="1">Cytoplasm</location>
    </subcellularLocation>
</comment>
<comment type="similarity">
    <text evidence="1">Belongs to the DNA polymerase type-Y family.</text>
</comment>